<dbReference type="EMBL" id="AE006470">
    <property type="protein sequence ID" value="AAM72674.1"/>
    <property type="molecule type" value="Genomic_DNA"/>
</dbReference>
<dbReference type="RefSeq" id="NP_662332.1">
    <property type="nucleotide sequence ID" value="NC_002932.3"/>
</dbReference>
<dbReference type="RefSeq" id="WP_010933113.1">
    <property type="nucleotide sequence ID" value="NC_002932.3"/>
</dbReference>
<dbReference type="SMR" id="Q8KCH5"/>
<dbReference type="STRING" id="194439.CT1446"/>
<dbReference type="EnsemblBacteria" id="AAM72674">
    <property type="protein sequence ID" value="AAM72674"/>
    <property type="gene ID" value="CT1446"/>
</dbReference>
<dbReference type="KEGG" id="cte:CT1446"/>
<dbReference type="PATRIC" id="fig|194439.7.peg.1312"/>
<dbReference type="eggNOG" id="COG0782">
    <property type="taxonomic scope" value="Bacteria"/>
</dbReference>
<dbReference type="HOGENOM" id="CLU_101379_2_0_10"/>
<dbReference type="OrthoDB" id="9808774at2"/>
<dbReference type="Proteomes" id="UP000001007">
    <property type="component" value="Chromosome"/>
</dbReference>
<dbReference type="GO" id="GO:0003677">
    <property type="term" value="F:DNA binding"/>
    <property type="evidence" value="ECO:0007669"/>
    <property type="project" value="UniProtKB-UniRule"/>
</dbReference>
<dbReference type="GO" id="GO:0070063">
    <property type="term" value="F:RNA polymerase binding"/>
    <property type="evidence" value="ECO:0007669"/>
    <property type="project" value="InterPro"/>
</dbReference>
<dbReference type="GO" id="GO:0006354">
    <property type="term" value="P:DNA-templated transcription elongation"/>
    <property type="evidence" value="ECO:0007669"/>
    <property type="project" value="TreeGrafter"/>
</dbReference>
<dbReference type="GO" id="GO:0032784">
    <property type="term" value="P:regulation of DNA-templated transcription elongation"/>
    <property type="evidence" value="ECO:0007669"/>
    <property type="project" value="UniProtKB-UniRule"/>
</dbReference>
<dbReference type="FunFam" id="1.10.287.180:FF:000001">
    <property type="entry name" value="Transcription elongation factor GreA"/>
    <property type="match status" value="1"/>
</dbReference>
<dbReference type="FunFam" id="3.10.50.30:FF:000001">
    <property type="entry name" value="Transcription elongation factor GreA"/>
    <property type="match status" value="1"/>
</dbReference>
<dbReference type="Gene3D" id="3.10.50.30">
    <property type="entry name" value="Transcription elongation factor, GreA/GreB, C-terminal domain"/>
    <property type="match status" value="1"/>
</dbReference>
<dbReference type="Gene3D" id="1.10.287.180">
    <property type="entry name" value="Transcription elongation factor, GreA/GreB, N-terminal domain"/>
    <property type="match status" value="1"/>
</dbReference>
<dbReference type="HAMAP" id="MF_00105">
    <property type="entry name" value="GreA_GreB"/>
    <property type="match status" value="1"/>
</dbReference>
<dbReference type="InterPro" id="IPR036953">
    <property type="entry name" value="GreA/GreB_C_sf"/>
</dbReference>
<dbReference type="InterPro" id="IPR018151">
    <property type="entry name" value="TF_GreA/GreB_CS"/>
</dbReference>
<dbReference type="InterPro" id="IPR006359">
    <property type="entry name" value="Tscrpt_elong_fac_GreA"/>
</dbReference>
<dbReference type="InterPro" id="IPR028624">
    <property type="entry name" value="Tscrpt_elong_fac_GreA/B"/>
</dbReference>
<dbReference type="InterPro" id="IPR001437">
    <property type="entry name" value="Tscrpt_elong_fac_GreA/B_C"/>
</dbReference>
<dbReference type="InterPro" id="IPR023459">
    <property type="entry name" value="Tscrpt_elong_fac_GreA/B_fam"/>
</dbReference>
<dbReference type="InterPro" id="IPR022691">
    <property type="entry name" value="Tscrpt_elong_fac_GreA/B_N"/>
</dbReference>
<dbReference type="InterPro" id="IPR036805">
    <property type="entry name" value="Tscrpt_elong_fac_GreA/B_N_sf"/>
</dbReference>
<dbReference type="NCBIfam" id="TIGR01462">
    <property type="entry name" value="greA"/>
    <property type="match status" value="1"/>
</dbReference>
<dbReference type="NCBIfam" id="NF001261">
    <property type="entry name" value="PRK00226.1-2"/>
    <property type="match status" value="1"/>
</dbReference>
<dbReference type="NCBIfam" id="NF001263">
    <property type="entry name" value="PRK00226.1-4"/>
    <property type="match status" value="1"/>
</dbReference>
<dbReference type="PANTHER" id="PTHR30437">
    <property type="entry name" value="TRANSCRIPTION ELONGATION FACTOR GREA"/>
    <property type="match status" value="1"/>
</dbReference>
<dbReference type="PANTHER" id="PTHR30437:SF4">
    <property type="entry name" value="TRANSCRIPTION ELONGATION FACTOR GREA"/>
    <property type="match status" value="1"/>
</dbReference>
<dbReference type="Pfam" id="PF01272">
    <property type="entry name" value="GreA_GreB"/>
    <property type="match status" value="1"/>
</dbReference>
<dbReference type="Pfam" id="PF03449">
    <property type="entry name" value="GreA_GreB_N"/>
    <property type="match status" value="1"/>
</dbReference>
<dbReference type="PIRSF" id="PIRSF006092">
    <property type="entry name" value="GreA_GreB"/>
    <property type="match status" value="1"/>
</dbReference>
<dbReference type="SUPFAM" id="SSF54534">
    <property type="entry name" value="FKBP-like"/>
    <property type="match status" value="1"/>
</dbReference>
<dbReference type="SUPFAM" id="SSF46557">
    <property type="entry name" value="GreA transcript cleavage protein, N-terminal domain"/>
    <property type="match status" value="1"/>
</dbReference>
<dbReference type="PROSITE" id="PS00829">
    <property type="entry name" value="GREAB_1"/>
    <property type="match status" value="1"/>
</dbReference>
<dbReference type="PROSITE" id="PS00830">
    <property type="entry name" value="GREAB_2"/>
    <property type="match status" value="1"/>
</dbReference>
<reference key="1">
    <citation type="journal article" date="2002" name="Proc. Natl. Acad. Sci. U.S.A.">
        <title>The complete genome sequence of Chlorobium tepidum TLS, a photosynthetic, anaerobic, green-sulfur bacterium.</title>
        <authorList>
            <person name="Eisen J.A."/>
            <person name="Nelson K.E."/>
            <person name="Paulsen I.T."/>
            <person name="Heidelberg J.F."/>
            <person name="Wu M."/>
            <person name="Dodson R.J."/>
            <person name="DeBoy R.T."/>
            <person name="Gwinn M.L."/>
            <person name="Nelson W.C."/>
            <person name="Haft D.H."/>
            <person name="Hickey E.K."/>
            <person name="Peterson J.D."/>
            <person name="Durkin A.S."/>
            <person name="Kolonay J.F."/>
            <person name="Yang F."/>
            <person name="Holt I.E."/>
            <person name="Umayam L.A."/>
            <person name="Mason T.M."/>
            <person name="Brenner M."/>
            <person name="Shea T.P."/>
            <person name="Parksey D.S."/>
            <person name="Nierman W.C."/>
            <person name="Feldblyum T.V."/>
            <person name="Hansen C.L."/>
            <person name="Craven M.B."/>
            <person name="Radune D."/>
            <person name="Vamathevan J.J."/>
            <person name="Khouri H.M."/>
            <person name="White O."/>
            <person name="Gruber T.M."/>
            <person name="Ketchum K.A."/>
            <person name="Venter J.C."/>
            <person name="Tettelin H."/>
            <person name="Bryant D.A."/>
            <person name="Fraser C.M."/>
        </authorList>
    </citation>
    <scope>NUCLEOTIDE SEQUENCE [LARGE SCALE GENOMIC DNA]</scope>
    <source>
        <strain>ATCC 49652 / DSM 12025 / NBRC 103806 / TLS</strain>
    </source>
</reference>
<name>GREA_CHLTE</name>
<accession>Q8KCH5</accession>
<protein>
    <recommendedName>
        <fullName evidence="1">Transcription elongation factor GreA</fullName>
    </recommendedName>
    <alternativeName>
        <fullName evidence="1">Transcript cleavage factor GreA</fullName>
    </alternativeName>
</protein>
<feature type="chain" id="PRO_0000176918" description="Transcription elongation factor GreA">
    <location>
        <begin position="1"/>
        <end position="159"/>
    </location>
</feature>
<feature type="coiled-coil region" evidence="1">
    <location>
        <begin position="43"/>
        <end position="75"/>
    </location>
</feature>
<gene>
    <name evidence="1" type="primary">greA</name>
    <name type="ordered locus">CT1446</name>
</gene>
<sequence length="159" mass="17949">MSDRIYLTRDGYNRLKEELHLLMTETRKEVLEKIAEARSHGDLSENAEYDAAREEQSQLEAKIGEIENKLASATILDPKQIKTDRVYILTSVKLRNLDAEDEIIEYTLVSSEEADSDLGKISVRSPVGRSLIGKSVGDKVTISVPKGELHYEILDIFVK</sequence>
<evidence type="ECO:0000255" key="1">
    <source>
        <dbReference type="HAMAP-Rule" id="MF_00105"/>
    </source>
</evidence>
<keyword id="KW-0175">Coiled coil</keyword>
<keyword id="KW-0238">DNA-binding</keyword>
<keyword id="KW-1185">Reference proteome</keyword>
<keyword id="KW-0804">Transcription</keyword>
<keyword id="KW-0805">Transcription regulation</keyword>
<organism>
    <name type="scientific">Chlorobaculum tepidum (strain ATCC 49652 / DSM 12025 / NBRC 103806 / TLS)</name>
    <name type="common">Chlorobium tepidum</name>
    <dbReference type="NCBI Taxonomy" id="194439"/>
    <lineage>
        <taxon>Bacteria</taxon>
        <taxon>Pseudomonadati</taxon>
        <taxon>Chlorobiota</taxon>
        <taxon>Chlorobiia</taxon>
        <taxon>Chlorobiales</taxon>
        <taxon>Chlorobiaceae</taxon>
        <taxon>Chlorobaculum</taxon>
    </lineage>
</organism>
<comment type="function">
    <text evidence="1">Necessary for efficient RNA polymerase transcription elongation past template-encoded arresting sites. The arresting sites in DNA have the property of trapping a certain fraction of elongating RNA polymerases that pass through, resulting in locked ternary complexes. Cleavage of the nascent transcript by cleavage factors such as GreA or GreB allows the resumption of elongation from the new 3'terminus. GreA releases sequences of 2 to 3 nucleotides.</text>
</comment>
<comment type="similarity">
    <text evidence="1">Belongs to the GreA/GreB family.</text>
</comment>
<proteinExistence type="inferred from homology"/>